<protein>
    <recommendedName>
        <fullName evidence="3">Nucleoside kinase</fullName>
        <shortName evidence="3">NK</shortName>
    </recommendedName>
    <alternativeName>
        <fullName evidence="5">Adenosine kinase</fullName>
        <ecNumber evidence="2">2.7.1.20</ecNumber>
    </alternativeName>
    <alternativeName>
        <fullName evidence="3">Broad specificity nucleoside kinase</fullName>
    </alternativeName>
    <alternativeName>
        <fullName evidence="5">Cytidine kinase</fullName>
        <ecNumber evidence="2">2.7.1.213</ecNumber>
    </alternativeName>
    <alternativeName>
        <fullName evidence="5">Guanosine-inosine kinase</fullName>
        <ecNumber evidence="2">2.7.1.73</ecNumber>
    </alternativeName>
</protein>
<accession>Q9HJT3</accession>
<reference key="1">
    <citation type="journal article" date="2000" name="Nature">
        <title>The genome sequence of the thermoacidophilic scavenger Thermoplasma acidophilum.</title>
        <authorList>
            <person name="Ruepp A."/>
            <person name="Graml W."/>
            <person name="Santos-Martinez M.-L."/>
            <person name="Koretke K.K."/>
            <person name="Volker C."/>
            <person name="Mewes H.-W."/>
            <person name="Frishman D."/>
            <person name="Stocker S."/>
            <person name="Lupas A.N."/>
            <person name="Baumeister W."/>
        </authorList>
    </citation>
    <scope>NUCLEOTIDE SEQUENCE [LARGE SCALE GENOMIC DNA]</scope>
    <source>
        <strain>ATCC 25905 / DSM 1728 / JCM 9062 / NBRC 15155 / AMRC-C165</strain>
    </source>
</reference>
<reference key="2">
    <citation type="journal article" date="2013" name="Proteins">
        <title>A broad specificity nucleoside kinase from Thermoplasma acidophilum.</title>
        <authorList>
            <person name="Elkin S.R."/>
            <person name="Kumar A."/>
            <person name="Price C.W."/>
            <person name="Columbus L."/>
        </authorList>
    </citation>
    <scope>X-RAY CRYSTALLOGRAPHY (1.91 ANGSTROMS)</scope>
    <scope>FUNCTION</scope>
    <scope>CATALYTIC ACTIVITY</scope>
    <scope>BIOPHYSICOCHEMICAL PROPERTIES</scope>
    <scope>SUBSTRATE SPECIFICITY</scope>
    <scope>COFACTOR</scope>
    <scope>SUBUNIT</scope>
    <source>
        <strain>ATCC 25905 / DSM 1728 / JCM 9062 / NBRC 15155 / AMRC-C165</strain>
    </source>
</reference>
<feature type="chain" id="PRO_0000439948" description="Nucleoside kinase">
    <location>
        <begin position="1"/>
        <end position="287"/>
    </location>
</feature>
<feature type="active site" description="Proton acceptor" evidence="1">
    <location>
        <position position="227"/>
    </location>
</feature>
<feature type="binding site" evidence="1">
    <location>
        <position position="13"/>
    </location>
    <ligand>
        <name>substrate</name>
    </ligand>
</feature>
<feature type="binding site" evidence="1">
    <location>
        <position position="28"/>
    </location>
    <ligand>
        <name>substrate</name>
    </ligand>
</feature>
<feature type="binding site" evidence="1">
    <location>
        <position position="38"/>
    </location>
    <ligand>
        <name>substrate</name>
    </ligand>
</feature>
<feature type="binding site" evidence="1">
    <location>
        <position position="42"/>
    </location>
    <ligand>
        <name>substrate</name>
    </ligand>
</feature>
<feature type="binding site" evidence="1">
    <location>
        <position position="102"/>
    </location>
    <ligand>
        <name>ATP</name>
        <dbReference type="ChEBI" id="CHEBI:30616"/>
    </ligand>
</feature>
<feature type="binding site" evidence="1">
    <location>
        <position position="104"/>
    </location>
    <ligand>
        <name>substrate</name>
    </ligand>
</feature>
<feature type="binding site" evidence="1">
    <location>
        <position position="150"/>
    </location>
    <ligand>
        <name>substrate</name>
    </ligand>
</feature>
<feature type="binding site" evidence="1">
    <location>
        <position position="173"/>
    </location>
    <ligand>
        <name>ATP</name>
        <dbReference type="ChEBI" id="CHEBI:30616"/>
    </ligand>
</feature>
<feature type="binding site" evidence="1">
    <location>
        <begin position="196"/>
        <end position="201"/>
    </location>
    <ligand>
        <name>ATP</name>
        <dbReference type="ChEBI" id="CHEBI:30616"/>
    </ligand>
</feature>
<feature type="binding site" evidence="1">
    <location>
        <position position="227"/>
    </location>
    <ligand>
        <name>substrate</name>
    </ligand>
</feature>
<feature type="site" description="Transition state stabilizer" evidence="1">
    <location>
        <position position="230"/>
    </location>
</feature>
<feature type="strand" evidence="7">
    <location>
        <begin position="2"/>
        <end position="7"/>
    </location>
</feature>
<feature type="strand" evidence="7">
    <location>
        <begin position="11"/>
        <end position="17"/>
    </location>
</feature>
<feature type="strand" evidence="7">
    <location>
        <begin position="23"/>
        <end position="28"/>
    </location>
</feature>
<feature type="strand" evidence="7">
    <location>
        <begin position="30"/>
        <end position="37"/>
    </location>
</feature>
<feature type="helix" evidence="7">
    <location>
        <begin position="38"/>
        <end position="49"/>
    </location>
</feature>
<feature type="strand" evidence="7">
    <location>
        <begin position="55"/>
        <end position="61"/>
    </location>
</feature>
<feature type="turn" evidence="7">
    <location>
        <begin position="62"/>
        <end position="64"/>
    </location>
</feature>
<feature type="helix" evidence="7">
    <location>
        <begin position="66"/>
        <end position="74"/>
    </location>
</feature>
<feature type="strand" evidence="7">
    <location>
        <begin position="82"/>
        <end position="85"/>
    </location>
</feature>
<feature type="strand" evidence="7">
    <location>
        <begin position="91"/>
        <end position="97"/>
    </location>
</feature>
<feature type="strand" evidence="7">
    <location>
        <begin position="102"/>
        <end position="107"/>
    </location>
</feature>
<feature type="helix" evidence="7">
    <location>
        <begin position="110"/>
        <end position="113"/>
    </location>
</feature>
<feature type="strand" evidence="7">
    <location>
        <begin position="122"/>
        <end position="127"/>
    </location>
</feature>
<feature type="strand" evidence="7">
    <location>
        <begin position="129"/>
        <end position="132"/>
    </location>
</feature>
<feature type="helix" evidence="7">
    <location>
        <begin position="133"/>
        <end position="139"/>
    </location>
</feature>
<feature type="strand" evidence="7">
    <location>
        <begin position="142"/>
        <end position="146"/>
    </location>
</feature>
<feature type="helix" evidence="7">
    <location>
        <begin position="149"/>
        <end position="154"/>
    </location>
</feature>
<feature type="helix" evidence="7">
    <location>
        <begin position="157"/>
        <end position="166"/>
    </location>
</feature>
<feature type="strand" evidence="7">
    <location>
        <begin position="168"/>
        <end position="173"/>
    </location>
</feature>
<feature type="helix" evidence="7">
    <location>
        <begin position="174"/>
        <end position="184"/>
    </location>
</feature>
<feature type="strand" evidence="7">
    <location>
        <begin position="193"/>
        <end position="197"/>
    </location>
</feature>
<feature type="helix" evidence="7">
    <location>
        <begin position="198"/>
        <end position="200"/>
    </location>
</feature>
<feature type="strand" evidence="7">
    <location>
        <begin position="201"/>
        <end position="206"/>
    </location>
</feature>
<feature type="strand" evidence="7">
    <location>
        <begin position="209"/>
        <end position="214"/>
    </location>
</feature>
<feature type="helix" evidence="7">
    <location>
        <begin position="225"/>
        <end position="238"/>
    </location>
</feature>
<feature type="helix" evidence="7">
    <location>
        <begin position="243"/>
        <end position="260"/>
    </location>
</feature>
<feature type="helix" evidence="7">
    <location>
        <begin position="269"/>
        <end position="282"/>
    </location>
</feature>
<organism>
    <name type="scientific">Thermoplasma acidophilum (strain ATCC 25905 / DSM 1728 / JCM 9062 / NBRC 15155 / AMRC-C165)</name>
    <dbReference type="NCBI Taxonomy" id="273075"/>
    <lineage>
        <taxon>Archaea</taxon>
        <taxon>Methanobacteriati</taxon>
        <taxon>Thermoplasmatota</taxon>
        <taxon>Thermoplasmata</taxon>
        <taxon>Thermoplasmatales</taxon>
        <taxon>Thermoplasmataceae</taxon>
        <taxon>Thermoplasma</taxon>
    </lineage>
</organism>
<gene>
    <name evidence="6" type="ordered locus">Ta0880</name>
</gene>
<dbReference type="EC" id="2.7.1.20" evidence="2"/>
<dbReference type="EC" id="2.7.1.213" evidence="2"/>
<dbReference type="EC" id="2.7.1.73" evidence="2"/>
<dbReference type="EMBL" id="AL445065">
    <property type="protein sequence ID" value="CAC12009.1"/>
    <property type="molecule type" value="Genomic_DNA"/>
</dbReference>
<dbReference type="RefSeq" id="WP_010901290.1">
    <property type="nucleotide sequence ID" value="NC_002578.1"/>
</dbReference>
<dbReference type="PDB" id="3BF5">
    <property type="method" value="X-ray"/>
    <property type="resolution" value="1.91 A"/>
    <property type="chains" value="A/B=1-287"/>
</dbReference>
<dbReference type="PDBsum" id="3BF5"/>
<dbReference type="SMR" id="Q9HJT3"/>
<dbReference type="FunCoup" id="Q9HJT3">
    <property type="interactions" value="157"/>
</dbReference>
<dbReference type="STRING" id="273075.gene:9572094"/>
<dbReference type="PaxDb" id="273075-Ta0880"/>
<dbReference type="DNASU" id="1456419"/>
<dbReference type="EnsemblBacteria" id="CAC12009">
    <property type="protein sequence ID" value="CAC12009"/>
    <property type="gene ID" value="CAC12009"/>
</dbReference>
<dbReference type="KEGG" id="tac:Ta0880"/>
<dbReference type="eggNOG" id="arCOG00014">
    <property type="taxonomic scope" value="Archaea"/>
</dbReference>
<dbReference type="HOGENOM" id="CLU_027634_5_2_2"/>
<dbReference type="InParanoid" id="Q9HJT3"/>
<dbReference type="OrthoDB" id="26949at2157"/>
<dbReference type="BRENDA" id="2.7.1.B20">
    <property type="organism ID" value="6324"/>
</dbReference>
<dbReference type="EvolutionaryTrace" id="Q9HJT3"/>
<dbReference type="Proteomes" id="UP000001024">
    <property type="component" value="Chromosome"/>
</dbReference>
<dbReference type="GO" id="GO:0004001">
    <property type="term" value="F:adenosine kinase activity"/>
    <property type="evidence" value="ECO:0000314"/>
    <property type="project" value="UniProtKB"/>
</dbReference>
<dbReference type="GO" id="GO:0005524">
    <property type="term" value="F:ATP binding"/>
    <property type="evidence" value="ECO:0000314"/>
    <property type="project" value="UniProtKB"/>
</dbReference>
<dbReference type="GO" id="GO:0043771">
    <property type="term" value="F:cytidine kinase activity"/>
    <property type="evidence" value="ECO:0000314"/>
    <property type="project" value="UniProtKB"/>
</dbReference>
<dbReference type="GO" id="GO:0005525">
    <property type="term" value="F:GTP binding"/>
    <property type="evidence" value="ECO:0000314"/>
    <property type="project" value="UniProtKB"/>
</dbReference>
<dbReference type="GO" id="GO:1905108">
    <property type="term" value="F:guanosine binding"/>
    <property type="evidence" value="ECO:0000314"/>
    <property type="project" value="UniProtKB"/>
</dbReference>
<dbReference type="GO" id="GO:0106366">
    <property type="term" value="F:guanosine kinase activity"/>
    <property type="evidence" value="ECO:0007669"/>
    <property type="project" value="RHEA"/>
</dbReference>
<dbReference type="GO" id="GO:0008906">
    <property type="term" value="F:inosine kinase activity"/>
    <property type="evidence" value="ECO:0000314"/>
    <property type="project" value="UniProtKB"/>
</dbReference>
<dbReference type="GO" id="GO:0019206">
    <property type="term" value="F:nucleoside kinase activity"/>
    <property type="evidence" value="ECO:0000314"/>
    <property type="project" value="UniProtKB"/>
</dbReference>
<dbReference type="GO" id="GO:0046085">
    <property type="term" value="P:adenosine metabolic process"/>
    <property type="evidence" value="ECO:0000314"/>
    <property type="project" value="UniProtKB"/>
</dbReference>
<dbReference type="GO" id="GO:0046087">
    <property type="term" value="P:cytidine metabolic process"/>
    <property type="evidence" value="ECO:0000314"/>
    <property type="project" value="UniProtKB"/>
</dbReference>
<dbReference type="GO" id="GO:0008617">
    <property type="term" value="P:guanosine metabolic process"/>
    <property type="evidence" value="ECO:0000314"/>
    <property type="project" value="UniProtKB"/>
</dbReference>
<dbReference type="GO" id="GO:0046102">
    <property type="term" value="P:inosine metabolic process"/>
    <property type="evidence" value="ECO:0000314"/>
    <property type="project" value="UniProtKB"/>
</dbReference>
<dbReference type="GO" id="GO:1901293">
    <property type="term" value="P:nucleoside phosphate biosynthetic process"/>
    <property type="evidence" value="ECO:0000314"/>
    <property type="project" value="UniProtKB"/>
</dbReference>
<dbReference type="GO" id="GO:0016310">
    <property type="term" value="P:phosphorylation"/>
    <property type="evidence" value="ECO:0000314"/>
    <property type="project" value="UniProtKB"/>
</dbReference>
<dbReference type="CDD" id="cd01942">
    <property type="entry name" value="ribokinase_group_A"/>
    <property type="match status" value="1"/>
</dbReference>
<dbReference type="Gene3D" id="3.40.1190.20">
    <property type="match status" value="1"/>
</dbReference>
<dbReference type="Gene3D" id="2.20.150.10">
    <property type="entry name" value="putative 5-dehydro-2- deoxygluconokinase"/>
    <property type="match status" value="1"/>
</dbReference>
<dbReference type="InterPro" id="IPR023314">
    <property type="entry name" value="Myo_inos_IolC-like_sf"/>
</dbReference>
<dbReference type="InterPro" id="IPR054998">
    <property type="entry name" value="NucKin"/>
</dbReference>
<dbReference type="InterPro" id="IPR011611">
    <property type="entry name" value="PfkB_dom"/>
</dbReference>
<dbReference type="InterPro" id="IPR029056">
    <property type="entry name" value="Ribokinase-like"/>
</dbReference>
<dbReference type="NCBIfam" id="NF041164">
    <property type="entry name" value="NucKinThplmales"/>
    <property type="match status" value="1"/>
</dbReference>
<dbReference type="PANTHER" id="PTHR10584:SF166">
    <property type="entry name" value="RIBOKINASE"/>
    <property type="match status" value="1"/>
</dbReference>
<dbReference type="PANTHER" id="PTHR10584">
    <property type="entry name" value="SUGAR KINASE"/>
    <property type="match status" value="1"/>
</dbReference>
<dbReference type="Pfam" id="PF00294">
    <property type="entry name" value="PfkB"/>
    <property type="match status" value="1"/>
</dbReference>
<dbReference type="SUPFAM" id="SSF53613">
    <property type="entry name" value="Ribokinase-like"/>
    <property type="match status" value="1"/>
</dbReference>
<proteinExistence type="evidence at protein level"/>
<comment type="function">
    <text evidence="2">Nucleoside kinase with broad substrate specificity. Catalyzes the phosphorylation of a variety of nucleosides to the corresponding nucleoside 5'-mono-phosphate in the presence of phosphate donors and divalent cations. Displays the most efficient activity with guanosine, followed by inosine, cytidine, and adenosine. Negligible enzymatic activity is detected with thymidine, uridine, and 2-deoxyadenosine. ATP is the most efficient phosphate donor, but can also use GTP and ITP. Shows no sugar kinase activity, since it is unable to phosphorylate ribose, fructose-1-phosphate, or fructose-6-phosphate.</text>
</comment>
<comment type="catalytic activity">
    <reaction evidence="2">
        <text>adenosine + ATP = AMP + ADP + H(+)</text>
        <dbReference type="Rhea" id="RHEA:20824"/>
        <dbReference type="ChEBI" id="CHEBI:15378"/>
        <dbReference type="ChEBI" id="CHEBI:16335"/>
        <dbReference type="ChEBI" id="CHEBI:30616"/>
        <dbReference type="ChEBI" id="CHEBI:456215"/>
        <dbReference type="ChEBI" id="CHEBI:456216"/>
        <dbReference type="EC" id="2.7.1.20"/>
    </reaction>
</comment>
<comment type="catalytic activity">
    <reaction evidence="2">
        <text>cytidine + ATP = CMP + ADP + H(+)</text>
        <dbReference type="Rhea" id="RHEA:24674"/>
        <dbReference type="ChEBI" id="CHEBI:15378"/>
        <dbReference type="ChEBI" id="CHEBI:17562"/>
        <dbReference type="ChEBI" id="CHEBI:30616"/>
        <dbReference type="ChEBI" id="CHEBI:60377"/>
        <dbReference type="ChEBI" id="CHEBI:456216"/>
        <dbReference type="EC" id="2.7.1.213"/>
    </reaction>
</comment>
<comment type="catalytic activity">
    <reaction evidence="2">
        <text>guanosine + ATP = GMP + ADP + H(+)</text>
        <dbReference type="Rhea" id="RHEA:27710"/>
        <dbReference type="ChEBI" id="CHEBI:15378"/>
        <dbReference type="ChEBI" id="CHEBI:16750"/>
        <dbReference type="ChEBI" id="CHEBI:30616"/>
        <dbReference type="ChEBI" id="CHEBI:58115"/>
        <dbReference type="ChEBI" id="CHEBI:456216"/>
        <dbReference type="EC" id="2.7.1.73"/>
    </reaction>
</comment>
<comment type="catalytic activity">
    <reaction evidence="2">
        <text>inosine + ATP = IMP + ADP + H(+)</text>
        <dbReference type="Rhea" id="RHEA:21140"/>
        <dbReference type="ChEBI" id="CHEBI:15378"/>
        <dbReference type="ChEBI" id="CHEBI:17596"/>
        <dbReference type="ChEBI" id="CHEBI:30616"/>
        <dbReference type="ChEBI" id="CHEBI:58053"/>
        <dbReference type="ChEBI" id="CHEBI:456216"/>
        <dbReference type="EC" id="2.7.1.73"/>
    </reaction>
</comment>
<comment type="cofactor">
    <cofactor evidence="2">
        <name>Mg(2+)</name>
        <dbReference type="ChEBI" id="CHEBI:18420"/>
    </cofactor>
    <cofactor evidence="2">
        <name>Co(2+)</name>
        <dbReference type="ChEBI" id="CHEBI:48828"/>
    </cofactor>
    <text evidence="2">Can use Mg(2+) and Co(2+) with equal efficiency in vitro, and to a lesser extent, Mn(2+), but not Ni(2+).</text>
</comment>
<comment type="biophysicochemical properties">
    <kinetics>
        <KM evidence="2">0.208 uM for guanosine (at pH 8.0 and 22 degrees Celsius)</KM>
        <KM evidence="2">0.712 uM for inosine (at pH 8.0 and 22 degrees Celsius)</KM>
        <KM evidence="2">0.411 uM for cytidine (at pH 8.0 and 22 degrees Celsius)</KM>
        <KM evidence="2">1.12 uM for adenosine (at pH 8.0 and 22 degrees Celsius)</KM>
        <KM evidence="2">46.9 uM for ATP (at pH 8.0 and 22 degrees Celsius)</KM>
        <KM evidence="2">185 uM for GTP (at pH 8.0 and 22 degrees Celsius)</KM>
        <text evidence="2">kcat is 0.072 sec(-1) with ATP and guanosine as substrates. kcat is 0.16 sec(-1) with ATP and inosine as substrates. kcat is 0.064 sec(-1) with ATP and cytidine as substrates. kcat is 0.084 sec(-1) with ATP and adenosine as substrates. kcat is 0.27 sec(-1) with GTP and inosine as substrates (at pH 8.0 and 22 degrees Celsius).</text>
    </kinetics>
    <phDependence>
        <text evidence="2">Optimum pH is 6.6. Significant activity is observed over the pH range of 6.4 to 7.8. Enzymatic activity decreases markedly at pH 8.0 and at pH 6.2 and below.</text>
    </phDependence>
</comment>
<comment type="subunit">
    <text evidence="2">Homodimer.</text>
</comment>
<comment type="similarity">
    <text evidence="4">Belongs to the carbohydrate kinase PfkB family.</text>
</comment>
<evidence type="ECO:0000250" key="1">
    <source>
        <dbReference type="UniProtKB" id="Q57849"/>
    </source>
</evidence>
<evidence type="ECO:0000269" key="2">
    <source>
    </source>
</evidence>
<evidence type="ECO:0000303" key="3">
    <source>
    </source>
</evidence>
<evidence type="ECO:0000305" key="4"/>
<evidence type="ECO:0000305" key="5">
    <source>
    </source>
</evidence>
<evidence type="ECO:0000312" key="6">
    <source>
        <dbReference type="EMBL" id="CAC12009.1"/>
    </source>
</evidence>
<evidence type="ECO:0007829" key="7">
    <source>
        <dbReference type="PDB" id="3BF5"/>
    </source>
</evidence>
<sequence length="287" mass="32805">MRFLAYFGHLNIDVLISVDSIPREGSVNVKDLRPRFGGTAGNFAIVAQKFRIPFDLYSAVGMKTHREYLAMIESMGINTGHVEKFEDESGPICYIATDGKKQVSFMHQGAMEKWKPQLADEYEYVHFSTGPNYLDMAKSIRSKIIFDPSQEIHKYSKDELKKFHEISYMSIFNDHEYRVFREMTGLSSPKVTTIVTNGERGSSLFMDGKKYDFPAIPSSGDTVGAGDSFRAGLYLALYNRRSIEKGMIYGTIIAHHVIDDGIENFSLNMEDLERETENYRRMFTKRS</sequence>
<keyword id="KW-0002">3D-structure</keyword>
<keyword id="KW-0067">ATP-binding</keyword>
<keyword id="KW-0170">Cobalt</keyword>
<keyword id="KW-0342">GTP-binding</keyword>
<keyword id="KW-0418">Kinase</keyword>
<keyword id="KW-0460">Magnesium</keyword>
<keyword id="KW-0547">Nucleotide-binding</keyword>
<keyword id="KW-1185">Reference proteome</keyword>
<keyword id="KW-0808">Transferase</keyword>
<name>NK_THEAC</name>